<dbReference type="EC" id="2.7.2.11" evidence="1"/>
<dbReference type="EMBL" id="CR954246">
    <property type="protein sequence ID" value="CAI85718.1"/>
    <property type="molecule type" value="Genomic_DNA"/>
</dbReference>
<dbReference type="SMR" id="Q3IHK8"/>
<dbReference type="STRING" id="326442.PSHAa0633"/>
<dbReference type="KEGG" id="pha:PSHAa0633"/>
<dbReference type="PATRIC" id="fig|326442.8.peg.596"/>
<dbReference type="eggNOG" id="COG0263">
    <property type="taxonomic scope" value="Bacteria"/>
</dbReference>
<dbReference type="HOGENOM" id="CLU_025400_2_0_6"/>
<dbReference type="BioCyc" id="PHAL326442:PSHA_RS03090-MONOMER"/>
<dbReference type="UniPathway" id="UPA00098">
    <property type="reaction ID" value="UER00359"/>
</dbReference>
<dbReference type="Proteomes" id="UP000006843">
    <property type="component" value="Chromosome I"/>
</dbReference>
<dbReference type="GO" id="GO:0005829">
    <property type="term" value="C:cytosol"/>
    <property type="evidence" value="ECO:0007669"/>
    <property type="project" value="TreeGrafter"/>
</dbReference>
<dbReference type="GO" id="GO:0005524">
    <property type="term" value="F:ATP binding"/>
    <property type="evidence" value="ECO:0007669"/>
    <property type="project" value="UniProtKB-KW"/>
</dbReference>
<dbReference type="GO" id="GO:0004349">
    <property type="term" value="F:glutamate 5-kinase activity"/>
    <property type="evidence" value="ECO:0007669"/>
    <property type="project" value="UniProtKB-UniRule"/>
</dbReference>
<dbReference type="GO" id="GO:0003723">
    <property type="term" value="F:RNA binding"/>
    <property type="evidence" value="ECO:0007669"/>
    <property type="project" value="InterPro"/>
</dbReference>
<dbReference type="GO" id="GO:0055129">
    <property type="term" value="P:L-proline biosynthetic process"/>
    <property type="evidence" value="ECO:0007669"/>
    <property type="project" value="UniProtKB-UniRule"/>
</dbReference>
<dbReference type="CDD" id="cd04242">
    <property type="entry name" value="AAK_G5K_ProB"/>
    <property type="match status" value="1"/>
</dbReference>
<dbReference type="CDD" id="cd21157">
    <property type="entry name" value="PUA_G5K"/>
    <property type="match status" value="1"/>
</dbReference>
<dbReference type="FunFam" id="3.40.1160.10:FF:000006">
    <property type="entry name" value="Glutamate 5-kinase"/>
    <property type="match status" value="1"/>
</dbReference>
<dbReference type="Gene3D" id="3.40.1160.10">
    <property type="entry name" value="Acetylglutamate kinase-like"/>
    <property type="match status" value="2"/>
</dbReference>
<dbReference type="Gene3D" id="2.30.130.10">
    <property type="entry name" value="PUA domain"/>
    <property type="match status" value="1"/>
</dbReference>
<dbReference type="HAMAP" id="MF_00456">
    <property type="entry name" value="ProB"/>
    <property type="match status" value="1"/>
</dbReference>
<dbReference type="InterPro" id="IPR036393">
    <property type="entry name" value="AceGlu_kinase-like_sf"/>
</dbReference>
<dbReference type="InterPro" id="IPR001048">
    <property type="entry name" value="Asp/Glu/Uridylate_kinase"/>
</dbReference>
<dbReference type="InterPro" id="IPR041739">
    <property type="entry name" value="G5K_ProB"/>
</dbReference>
<dbReference type="InterPro" id="IPR001057">
    <property type="entry name" value="Glu/AcGlu_kinase"/>
</dbReference>
<dbReference type="InterPro" id="IPR011529">
    <property type="entry name" value="Glu_5kinase"/>
</dbReference>
<dbReference type="InterPro" id="IPR005715">
    <property type="entry name" value="Glu_5kinase/COase_Synthase"/>
</dbReference>
<dbReference type="InterPro" id="IPR019797">
    <property type="entry name" value="Glutamate_5-kinase_CS"/>
</dbReference>
<dbReference type="InterPro" id="IPR002478">
    <property type="entry name" value="PUA"/>
</dbReference>
<dbReference type="InterPro" id="IPR015947">
    <property type="entry name" value="PUA-like_sf"/>
</dbReference>
<dbReference type="InterPro" id="IPR036974">
    <property type="entry name" value="PUA_sf"/>
</dbReference>
<dbReference type="NCBIfam" id="TIGR01027">
    <property type="entry name" value="proB"/>
    <property type="match status" value="1"/>
</dbReference>
<dbReference type="PANTHER" id="PTHR43654">
    <property type="entry name" value="GLUTAMATE 5-KINASE"/>
    <property type="match status" value="1"/>
</dbReference>
<dbReference type="PANTHER" id="PTHR43654:SF1">
    <property type="entry name" value="ISOPENTENYL PHOSPHATE KINASE"/>
    <property type="match status" value="1"/>
</dbReference>
<dbReference type="Pfam" id="PF00696">
    <property type="entry name" value="AA_kinase"/>
    <property type="match status" value="1"/>
</dbReference>
<dbReference type="Pfam" id="PF01472">
    <property type="entry name" value="PUA"/>
    <property type="match status" value="1"/>
</dbReference>
<dbReference type="PIRSF" id="PIRSF000729">
    <property type="entry name" value="GK"/>
    <property type="match status" value="1"/>
</dbReference>
<dbReference type="PRINTS" id="PR00474">
    <property type="entry name" value="GLU5KINASE"/>
</dbReference>
<dbReference type="SMART" id="SM00359">
    <property type="entry name" value="PUA"/>
    <property type="match status" value="1"/>
</dbReference>
<dbReference type="SUPFAM" id="SSF53633">
    <property type="entry name" value="Carbamate kinase-like"/>
    <property type="match status" value="1"/>
</dbReference>
<dbReference type="SUPFAM" id="SSF88697">
    <property type="entry name" value="PUA domain-like"/>
    <property type="match status" value="1"/>
</dbReference>
<dbReference type="PROSITE" id="PS00902">
    <property type="entry name" value="GLUTAMATE_5_KINASE"/>
    <property type="match status" value="1"/>
</dbReference>
<dbReference type="PROSITE" id="PS50890">
    <property type="entry name" value="PUA"/>
    <property type="match status" value="1"/>
</dbReference>
<reference key="1">
    <citation type="journal article" date="2005" name="Genome Res.">
        <title>Coping with cold: the genome of the versatile marine Antarctica bacterium Pseudoalteromonas haloplanktis TAC125.</title>
        <authorList>
            <person name="Medigue C."/>
            <person name="Krin E."/>
            <person name="Pascal G."/>
            <person name="Barbe V."/>
            <person name="Bernsel A."/>
            <person name="Bertin P.N."/>
            <person name="Cheung F."/>
            <person name="Cruveiller S."/>
            <person name="D'Amico S."/>
            <person name="Duilio A."/>
            <person name="Fang G."/>
            <person name="Feller G."/>
            <person name="Ho C."/>
            <person name="Mangenot S."/>
            <person name="Marino G."/>
            <person name="Nilsson J."/>
            <person name="Parrilli E."/>
            <person name="Rocha E.P.C."/>
            <person name="Rouy Z."/>
            <person name="Sekowska A."/>
            <person name="Tutino M.L."/>
            <person name="Vallenet D."/>
            <person name="von Heijne G."/>
            <person name="Danchin A."/>
        </authorList>
    </citation>
    <scope>NUCLEOTIDE SEQUENCE [LARGE SCALE GENOMIC DNA]</scope>
    <source>
        <strain>TAC 125</strain>
    </source>
</reference>
<sequence>MQRDQVIVVKLGTSVLTGGTDKLDKAHMVELVRQCCELKKQGHHVILVSSGAVAAGREQLLKPCGRSVIDKQMLAAVGQGQLIHIWQSLFALYGVNVGQMLLTRADVNDRERYLNARDTLNALLNYDVVPIINENDAVATSEIKVGDNDNLSALVAILANANKLLLLTDQEGLFTSDPRTNADATLIGEVSDINDELRQLAGGSGTNLGTGGMATKLQAADIARRAGVEVIIAKGAGKNVILKCMSEQLPGTRFLKLTAPKEGRKKWLLAGPKSSGQIVIDAGAITALQTKGASLLAKGVTNALGAFERGDLISVINSDKQLIARGLTRFSSSEVNKIKGAHSKQIGELLDYDGGAEVLHRDDLILL</sequence>
<accession>Q3IHK8</accession>
<protein>
    <recommendedName>
        <fullName evidence="1">Glutamate 5-kinase 2</fullName>
        <ecNumber evidence="1">2.7.2.11</ecNumber>
    </recommendedName>
    <alternativeName>
        <fullName evidence="1">Gamma-glutamyl kinase 2</fullName>
        <shortName evidence="1">GK 2</shortName>
    </alternativeName>
</protein>
<keyword id="KW-0028">Amino-acid biosynthesis</keyword>
<keyword id="KW-0067">ATP-binding</keyword>
<keyword id="KW-0963">Cytoplasm</keyword>
<keyword id="KW-0418">Kinase</keyword>
<keyword id="KW-0547">Nucleotide-binding</keyword>
<keyword id="KW-0641">Proline biosynthesis</keyword>
<keyword id="KW-1185">Reference proteome</keyword>
<keyword id="KW-0808">Transferase</keyword>
<gene>
    <name evidence="1" type="primary">proB2</name>
    <name type="ordered locus">PSHAa0633</name>
</gene>
<organism>
    <name type="scientific">Pseudoalteromonas translucida (strain TAC 125)</name>
    <dbReference type="NCBI Taxonomy" id="326442"/>
    <lineage>
        <taxon>Bacteria</taxon>
        <taxon>Pseudomonadati</taxon>
        <taxon>Pseudomonadota</taxon>
        <taxon>Gammaproteobacteria</taxon>
        <taxon>Alteromonadales</taxon>
        <taxon>Pseudoalteromonadaceae</taxon>
        <taxon>Pseudoalteromonas</taxon>
    </lineage>
</organism>
<name>PROB2_PSET1</name>
<evidence type="ECO:0000255" key="1">
    <source>
        <dbReference type="HAMAP-Rule" id="MF_00456"/>
    </source>
</evidence>
<feature type="chain" id="PRO_0000230056" description="Glutamate 5-kinase 2">
    <location>
        <begin position="1"/>
        <end position="367"/>
    </location>
</feature>
<feature type="domain" description="PUA" evidence="1">
    <location>
        <begin position="275"/>
        <end position="353"/>
    </location>
</feature>
<feature type="binding site" evidence="1">
    <location>
        <position position="10"/>
    </location>
    <ligand>
        <name>ATP</name>
        <dbReference type="ChEBI" id="CHEBI:30616"/>
    </ligand>
</feature>
<feature type="binding site" evidence="1">
    <location>
        <position position="50"/>
    </location>
    <ligand>
        <name>substrate</name>
    </ligand>
</feature>
<feature type="binding site" evidence="1">
    <location>
        <position position="136"/>
    </location>
    <ligand>
        <name>substrate</name>
    </ligand>
</feature>
<feature type="binding site" evidence="1">
    <location>
        <position position="148"/>
    </location>
    <ligand>
        <name>substrate</name>
    </ligand>
</feature>
<feature type="binding site" evidence="1">
    <location>
        <begin position="168"/>
        <end position="169"/>
    </location>
    <ligand>
        <name>ATP</name>
        <dbReference type="ChEBI" id="CHEBI:30616"/>
    </ligand>
</feature>
<feature type="binding site" evidence="1">
    <location>
        <begin position="210"/>
        <end position="216"/>
    </location>
    <ligand>
        <name>ATP</name>
        <dbReference type="ChEBI" id="CHEBI:30616"/>
    </ligand>
</feature>
<comment type="function">
    <text evidence="1">Catalyzes the transfer of a phosphate group to glutamate to form L-glutamate 5-phosphate.</text>
</comment>
<comment type="catalytic activity">
    <reaction evidence="1">
        <text>L-glutamate + ATP = L-glutamyl 5-phosphate + ADP</text>
        <dbReference type="Rhea" id="RHEA:14877"/>
        <dbReference type="ChEBI" id="CHEBI:29985"/>
        <dbReference type="ChEBI" id="CHEBI:30616"/>
        <dbReference type="ChEBI" id="CHEBI:58274"/>
        <dbReference type="ChEBI" id="CHEBI:456216"/>
        <dbReference type="EC" id="2.7.2.11"/>
    </reaction>
</comment>
<comment type="pathway">
    <text evidence="1">Amino-acid biosynthesis; L-proline biosynthesis; L-glutamate 5-semialdehyde from L-glutamate: step 1/2.</text>
</comment>
<comment type="subcellular location">
    <subcellularLocation>
        <location evidence="1">Cytoplasm</location>
    </subcellularLocation>
</comment>
<comment type="similarity">
    <text evidence="1">Belongs to the glutamate 5-kinase family.</text>
</comment>
<proteinExistence type="inferred from homology"/>